<accession>A1UR36</accession>
<gene>
    <name evidence="1" type="primary">acsA</name>
    <name type="ordered locus">BARBAKC583_0101</name>
</gene>
<feature type="chain" id="PRO_1000065269" description="Acetyl-coenzyme A synthetase">
    <location>
        <begin position="1"/>
        <end position="652"/>
    </location>
</feature>
<feature type="binding site" evidence="1">
    <location>
        <begin position="189"/>
        <end position="192"/>
    </location>
    <ligand>
        <name>CoA</name>
        <dbReference type="ChEBI" id="CHEBI:57287"/>
    </ligand>
</feature>
<feature type="binding site" evidence="1">
    <location>
        <position position="311"/>
    </location>
    <ligand>
        <name>CoA</name>
        <dbReference type="ChEBI" id="CHEBI:57287"/>
    </ligand>
</feature>
<feature type="binding site" evidence="1">
    <location>
        <begin position="387"/>
        <end position="389"/>
    </location>
    <ligand>
        <name>ATP</name>
        <dbReference type="ChEBI" id="CHEBI:30616"/>
    </ligand>
</feature>
<feature type="binding site" evidence="1">
    <location>
        <begin position="411"/>
        <end position="416"/>
    </location>
    <ligand>
        <name>ATP</name>
        <dbReference type="ChEBI" id="CHEBI:30616"/>
    </ligand>
</feature>
<feature type="binding site" evidence="1">
    <location>
        <position position="500"/>
    </location>
    <ligand>
        <name>ATP</name>
        <dbReference type="ChEBI" id="CHEBI:30616"/>
    </ligand>
</feature>
<feature type="binding site" evidence="1">
    <location>
        <position position="515"/>
    </location>
    <ligand>
        <name>ATP</name>
        <dbReference type="ChEBI" id="CHEBI:30616"/>
    </ligand>
</feature>
<feature type="binding site" evidence="1">
    <location>
        <position position="523"/>
    </location>
    <ligand>
        <name>CoA</name>
        <dbReference type="ChEBI" id="CHEBI:57287"/>
    </ligand>
</feature>
<feature type="binding site" evidence="1">
    <location>
        <position position="526"/>
    </location>
    <ligand>
        <name>ATP</name>
        <dbReference type="ChEBI" id="CHEBI:30616"/>
    </ligand>
</feature>
<feature type="binding site" evidence="1">
    <location>
        <position position="539"/>
    </location>
    <ligand>
        <name>Mg(2+)</name>
        <dbReference type="ChEBI" id="CHEBI:18420"/>
    </ligand>
</feature>
<feature type="binding site" evidence="1">
    <location>
        <position position="542"/>
    </location>
    <ligand>
        <name>Mg(2+)</name>
        <dbReference type="ChEBI" id="CHEBI:18420"/>
    </ligand>
</feature>
<feature type="binding site">
    <location>
        <position position="584"/>
    </location>
    <ligand>
        <name>CoA</name>
        <dbReference type="ChEBI" id="CHEBI:57287"/>
    </ligand>
</feature>
<feature type="modified residue" description="N6-acetyllysine" evidence="1">
    <location>
        <position position="609"/>
    </location>
</feature>
<organism>
    <name type="scientific">Bartonella bacilliformis (strain ATCC 35685 / KC583 / Herrer 020/F12,63)</name>
    <dbReference type="NCBI Taxonomy" id="360095"/>
    <lineage>
        <taxon>Bacteria</taxon>
        <taxon>Pseudomonadati</taxon>
        <taxon>Pseudomonadota</taxon>
        <taxon>Alphaproteobacteria</taxon>
        <taxon>Hyphomicrobiales</taxon>
        <taxon>Bartonellaceae</taxon>
        <taxon>Bartonella</taxon>
    </lineage>
</organism>
<dbReference type="EC" id="6.2.1.1" evidence="1"/>
<dbReference type="EMBL" id="CP000524">
    <property type="protein sequence ID" value="ABM44660.1"/>
    <property type="molecule type" value="Genomic_DNA"/>
</dbReference>
<dbReference type="SMR" id="A1UR36"/>
<dbReference type="STRING" id="360095.BARBAKC583_0101"/>
<dbReference type="GeneID" id="4684414"/>
<dbReference type="KEGG" id="bbk:BARBAKC583_0101"/>
<dbReference type="PATRIC" id="fig|360095.6.peg.101"/>
<dbReference type="eggNOG" id="COG0365">
    <property type="taxonomic scope" value="Bacteria"/>
</dbReference>
<dbReference type="HOGENOM" id="CLU_000022_3_6_5"/>
<dbReference type="OrthoDB" id="9803968at2"/>
<dbReference type="Proteomes" id="UP000000643">
    <property type="component" value="Chromosome"/>
</dbReference>
<dbReference type="GO" id="GO:0005829">
    <property type="term" value="C:cytosol"/>
    <property type="evidence" value="ECO:0007669"/>
    <property type="project" value="TreeGrafter"/>
</dbReference>
<dbReference type="GO" id="GO:0003987">
    <property type="term" value="F:acetate-CoA ligase activity"/>
    <property type="evidence" value="ECO:0007669"/>
    <property type="project" value="UniProtKB-UniRule"/>
</dbReference>
<dbReference type="GO" id="GO:0016208">
    <property type="term" value="F:AMP binding"/>
    <property type="evidence" value="ECO:0007669"/>
    <property type="project" value="InterPro"/>
</dbReference>
<dbReference type="GO" id="GO:0005524">
    <property type="term" value="F:ATP binding"/>
    <property type="evidence" value="ECO:0007669"/>
    <property type="project" value="UniProtKB-KW"/>
</dbReference>
<dbReference type="GO" id="GO:0046872">
    <property type="term" value="F:metal ion binding"/>
    <property type="evidence" value="ECO:0007669"/>
    <property type="project" value="UniProtKB-KW"/>
</dbReference>
<dbReference type="GO" id="GO:0019427">
    <property type="term" value="P:acetyl-CoA biosynthetic process from acetate"/>
    <property type="evidence" value="ECO:0007669"/>
    <property type="project" value="InterPro"/>
</dbReference>
<dbReference type="CDD" id="cd05966">
    <property type="entry name" value="ACS"/>
    <property type="match status" value="1"/>
</dbReference>
<dbReference type="FunFam" id="3.30.300.30:FF:000004">
    <property type="entry name" value="Acetyl-coenzyme A synthetase"/>
    <property type="match status" value="1"/>
</dbReference>
<dbReference type="FunFam" id="3.40.50.12780:FF:000001">
    <property type="entry name" value="Acetyl-coenzyme A synthetase"/>
    <property type="match status" value="1"/>
</dbReference>
<dbReference type="Gene3D" id="3.30.300.30">
    <property type="match status" value="1"/>
</dbReference>
<dbReference type="Gene3D" id="3.40.50.12780">
    <property type="entry name" value="N-terminal domain of ligase-like"/>
    <property type="match status" value="1"/>
</dbReference>
<dbReference type="HAMAP" id="MF_01123">
    <property type="entry name" value="Ac_CoA_synth"/>
    <property type="match status" value="1"/>
</dbReference>
<dbReference type="InterPro" id="IPR011904">
    <property type="entry name" value="Ac_CoA_lig"/>
</dbReference>
<dbReference type="InterPro" id="IPR032387">
    <property type="entry name" value="ACAS_N"/>
</dbReference>
<dbReference type="InterPro" id="IPR025110">
    <property type="entry name" value="AMP-bd_C"/>
</dbReference>
<dbReference type="InterPro" id="IPR045851">
    <property type="entry name" value="AMP-bd_C_sf"/>
</dbReference>
<dbReference type="InterPro" id="IPR020845">
    <property type="entry name" value="AMP-binding_CS"/>
</dbReference>
<dbReference type="InterPro" id="IPR000873">
    <property type="entry name" value="AMP-dep_synth/lig_dom"/>
</dbReference>
<dbReference type="InterPro" id="IPR042099">
    <property type="entry name" value="ANL_N_sf"/>
</dbReference>
<dbReference type="NCBIfam" id="TIGR02188">
    <property type="entry name" value="Ac_CoA_lig_AcsA"/>
    <property type="match status" value="1"/>
</dbReference>
<dbReference type="NCBIfam" id="NF001208">
    <property type="entry name" value="PRK00174.1"/>
    <property type="match status" value="1"/>
</dbReference>
<dbReference type="PANTHER" id="PTHR24095">
    <property type="entry name" value="ACETYL-COENZYME A SYNTHETASE"/>
    <property type="match status" value="1"/>
</dbReference>
<dbReference type="PANTHER" id="PTHR24095:SF14">
    <property type="entry name" value="ACETYL-COENZYME A SYNTHETASE 1"/>
    <property type="match status" value="1"/>
</dbReference>
<dbReference type="Pfam" id="PF16177">
    <property type="entry name" value="ACAS_N"/>
    <property type="match status" value="1"/>
</dbReference>
<dbReference type="Pfam" id="PF00501">
    <property type="entry name" value="AMP-binding"/>
    <property type="match status" value="1"/>
</dbReference>
<dbReference type="Pfam" id="PF13193">
    <property type="entry name" value="AMP-binding_C"/>
    <property type="match status" value="1"/>
</dbReference>
<dbReference type="SUPFAM" id="SSF56801">
    <property type="entry name" value="Acetyl-CoA synthetase-like"/>
    <property type="match status" value="1"/>
</dbReference>
<dbReference type="PROSITE" id="PS00455">
    <property type="entry name" value="AMP_BINDING"/>
    <property type="match status" value="1"/>
</dbReference>
<keyword id="KW-0007">Acetylation</keyword>
<keyword id="KW-0067">ATP-binding</keyword>
<keyword id="KW-0436">Ligase</keyword>
<keyword id="KW-0460">Magnesium</keyword>
<keyword id="KW-0479">Metal-binding</keyword>
<keyword id="KW-0547">Nucleotide-binding</keyword>
<comment type="function">
    <text evidence="1">Catalyzes the conversion of acetate into acetyl-CoA (AcCoA), an essential intermediate at the junction of anabolic and catabolic pathways. AcsA undergoes a two-step reaction. In the first half reaction, AcsA combines acetate with ATP to form acetyl-adenylate (AcAMP) intermediate. In the second half reaction, it can then transfer the acetyl group from AcAMP to the sulfhydryl group of CoA, forming the product AcCoA.</text>
</comment>
<comment type="catalytic activity">
    <reaction evidence="1">
        <text>acetate + ATP + CoA = acetyl-CoA + AMP + diphosphate</text>
        <dbReference type="Rhea" id="RHEA:23176"/>
        <dbReference type="ChEBI" id="CHEBI:30089"/>
        <dbReference type="ChEBI" id="CHEBI:30616"/>
        <dbReference type="ChEBI" id="CHEBI:33019"/>
        <dbReference type="ChEBI" id="CHEBI:57287"/>
        <dbReference type="ChEBI" id="CHEBI:57288"/>
        <dbReference type="ChEBI" id="CHEBI:456215"/>
        <dbReference type="EC" id="6.2.1.1"/>
    </reaction>
</comment>
<comment type="cofactor">
    <cofactor evidence="1">
        <name>Mg(2+)</name>
        <dbReference type="ChEBI" id="CHEBI:18420"/>
    </cofactor>
</comment>
<comment type="PTM">
    <text evidence="1">Acetylated. Deacetylation by the SIR2-homolog deacetylase activates the enzyme.</text>
</comment>
<comment type="similarity">
    <text evidence="1">Belongs to the ATP-dependent AMP-binding enzyme family.</text>
</comment>
<protein>
    <recommendedName>
        <fullName evidence="1">Acetyl-coenzyme A synthetase</fullName>
        <shortName evidence="1">AcCoA synthetase</shortName>
        <shortName evidence="1">Acs</shortName>
        <ecNumber evidence="1">6.2.1.1</ecNumber>
    </recommendedName>
    <alternativeName>
        <fullName evidence="1">Acetate--CoA ligase</fullName>
    </alternativeName>
    <alternativeName>
        <fullName evidence="1">Acyl-activating enzyme</fullName>
    </alternativeName>
</protein>
<sequence>MSERIYPIPVDIEKNALIDQDTYQKWYQKSIEDPTSFWGEHGQRIEWFKPYTKVKNASFNDNVSIKWYEDGITNVAYNCIDRHLKDRGNEIALIWESDNPYSDKKITYNELYEHVCRFANILKNHGVKKGDRVSIYLPMIPEAAYAMLACARIGAIHSVIFAGFSSEAIAGRLIDGQSTFIITADHALRGDKTIPLKDNVDRAIHIAACQNVNVTQVMVIRRTSKIIHWVNGRDFWYHEEMPHATPDCPPEHMNAEDPLFILYTSGSTGKPKGVLHTTGGYLVYASMTHQYVFDYHPGEIYWCTADIGWITGHSYLVYGPLCNGATTLMFEGSPTFPDEGRFWEIVDKHKVNIFYTAPTAIRALMGAGDSFVKRSQRTSLRLLGTVGEPINPEAWKWFYHTVGDSRCPILDTWWQTETGGHIITPLPGATKLKAGSATHPFFGIQVQLVDPQGNILKGEAEGNLCIVDSWPGQMRTLYNNHQRFVETYFSTYKGKYFTGDGCKRDKDSYYWITGRVDDILNISGHRLGTAEIESALISHPAVSEAAVVGYPHPIKGQGIYSFVTLMAGTQPSATLHQNLIQHVRQEIGSIATLDKIQFAPHLPKTRSGKIMRRILRKIAANNFDNLGDISTLAEPQIVDNLIANRQNIEEAA</sequence>
<reference key="1">
    <citation type="submission" date="2006-12" db="EMBL/GenBank/DDBJ databases">
        <authorList>
            <person name="Hendrix L."/>
            <person name="Mohamoud Y."/>
            <person name="Radune D."/>
            <person name="Shvartsbeyn A."/>
            <person name="Daugherty S."/>
            <person name="Dodson R."/>
            <person name="Durkin A.S."/>
            <person name="Harkins D."/>
            <person name="Huot H."/>
            <person name="Kothari S.P."/>
            <person name="Madupu R."/>
            <person name="Li J."/>
            <person name="Nelson W.C."/>
            <person name="Shrivastava S."/>
            <person name="Giglio M.G."/>
            <person name="Haft D."/>
            <person name="Selengut J."/>
            <person name="Fraser-Ligget C."/>
            <person name="Seshadri R."/>
        </authorList>
    </citation>
    <scope>NUCLEOTIDE SEQUENCE [LARGE SCALE GENOMIC DNA]</scope>
    <source>
        <strain>ATCC 35685 / KC583 / Herrer 020/F12,63</strain>
    </source>
</reference>
<evidence type="ECO:0000255" key="1">
    <source>
        <dbReference type="HAMAP-Rule" id="MF_01123"/>
    </source>
</evidence>
<proteinExistence type="inferred from homology"/>
<name>ACSA_BARBK</name>